<sequence length="403" mass="45010">MAQSKPVKKIVLAYSGGLDTSVILTWLKETYGCEVIAFTADVGQKEELSGLEEKGIKTGASKVYIQDLRLEFARDFIFPAIQGNALYEMRYLLGTSLARPLIAKAMVEVAEKEGADAFAHGATGKGNDQVRFELGVKSLAPEKTIIAPWRIWNFGGRSDLIEYAKSKGIPVSITVEKPYSMDRNLMHISYEGGILEDPYREPDEKMFLLTTSPEKAPDAPEYLELDFQEGNCVAINGKKLNPYEVMEALNTIAGKHGVGRVDIVENRLVGIKSRGVYETPGGTVLFLAHRDLESITIDRDTQHHKDKLSIEFAELIYNGHWFSSRMKAVRAFITETQRYVTGAVKVKLYKGTCSIVGRKSSVSLYNPKMATFEKEELYNQKDAEGFINIYGLPAQETARLRKK</sequence>
<feature type="chain" id="PRO_1000000403" description="Argininosuccinate synthase">
    <location>
        <begin position="1"/>
        <end position="403"/>
    </location>
</feature>
<feature type="binding site" evidence="1">
    <location>
        <begin position="13"/>
        <end position="21"/>
    </location>
    <ligand>
        <name>ATP</name>
        <dbReference type="ChEBI" id="CHEBI:30616"/>
    </ligand>
</feature>
<feature type="binding site" evidence="1">
    <location>
        <position position="40"/>
    </location>
    <ligand>
        <name>ATP</name>
        <dbReference type="ChEBI" id="CHEBI:30616"/>
    </ligand>
</feature>
<feature type="binding site" evidence="1">
    <location>
        <position position="91"/>
    </location>
    <ligand>
        <name>L-citrulline</name>
        <dbReference type="ChEBI" id="CHEBI:57743"/>
    </ligand>
</feature>
<feature type="binding site" evidence="1">
    <location>
        <position position="96"/>
    </location>
    <ligand>
        <name>L-citrulline</name>
        <dbReference type="ChEBI" id="CHEBI:57743"/>
    </ligand>
</feature>
<feature type="binding site" evidence="1">
    <location>
        <position position="121"/>
    </location>
    <ligand>
        <name>ATP</name>
        <dbReference type="ChEBI" id="CHEBI:30616"/>
    </ligand>
</feature>
<feature type="binding site" evidence="1">
    <location>
        <position position="123"/>
    </location>
    <ligand>
        <name>L-aspartate</name>
        <dbReference type="ChEBI" id="CHEBI:29991"/>
    </ligand>
</feature>
<feature type="binding site" evidence="1">
    <location>
        <position position="127"/>
    </location>
    <ligand>
        <name>L-aspartate</name>
        <dbReference type="ChEBI" id="CHEBI:29991"/>
    </ligand>
</feature>
<feature type="binding site" evidence="1">
    <location>
        <position position="127"/>
    </location>
    <ligand>
        <name>L-citrulline</name>
        <dbReference type="ChEBI" id="CHEBI:57743"/>
    </ligand>
</feature>
<feature type="binding site" evidence="1">
    <location>
        <position position="128"/>
    </location>
    <ligand>
        <name>L-aspartate</name>
        <dbReference type="ChEBI" id="CHEBI:29991"/>
    </ligand>
</feature>
<feature type="binding site" evidence="1">
    <location>
        <position position="131"/>
    </location>
    <ligand>
        <name>L-citrulline</name>
        <dbReference type="ChEBI" id="CHEBI:57743"/>
    </ligand>
</feature>
<feature type="binding site" evidence="1">
    <location>
        <position position="180"/>
    </location>
    <ligand>
        <name>L-citrulline</name>
        <dbReference type="ChEBI" id="CHEBI:57743"/>
    </ligand>
</feature>
<feature type="binding site" evidence="1">
    <location>
        <position position="189"/>
    </location>
    <ligand>
        <name>L-citrulline</name>
        <dbReference type="ChEBI" id="CHEBI:57743"/>
    </ligand>
</feature>
<feature type="binding site" evidence="1">
    <location>
        <position position="265"/>
    </location>
    <ligand>
        <name>L-citrulline</name>
        <dbReference type="ChEBI" id="CHEBI:57743"/>
    </ligand>
</feature>
<feature type="binding site" evidence="1">
    <location>
        <position position="277"/>
    </location>
    <ligand>
        <name>L-citrulline</name>
        <dbReference type="ChEBI" id="CHEBI:57743"/>
    </ligand>
</feature>
<gene>
    <name evidence="1" type="primary">argG</name>
    <name type="ordered locus">LBL_0178</name>
</gene>
<organism>
    <name type="scientific">Leptospira borgpetersenii serovar Hardjo-bovis (strain L550)</name>
    <dbReference type="NCBI Taxonomy" id="355276"/>
    <lineage>
        <taxon>Bacteria</taxon>
        <taxon>Pseudomonadati</taxon>
        <taxon>Spirochaetota</taxon>
        <taxon>Spirochaetia</taxon>
        <taxon>Leptospirales</taxon>
        <taxon>Leptospiraceae</taxon>
        <taxon>Leptospira</taxon>
    </lineage>
</organism>
<keyword id="KW-0028">Amino-acid biosynthesis</keyword>
<keyword id="KW-0055">Arginine biosynthesis</keyword>
<keyword id="KW-0067">ATP-binding</keyword>
<keyword id="KW-0963">Cytoplasm</keyword>
<keyword id="KW-0436">Ligase</keyword>
<keyword id="KW-0547">Nucleotide-binding</keyword>
<reference key="1">
    <citation type="journal article" date="2006" name="Proc. Natl. Acad. Sci. U.S.A.">
        <title>Genome reduction in Leptospira borgpetersenii reflects limited transmission potential.</title>
        <authorList>
            <person name="Bulach D.M."/>
            <person name="Zuerner R.L."/>
            <person name="Wilson P."/>
            <person name="Seemann T."/>
            <person name="McGrath A."/>
            <person name="Cullen P.A."/>
            <person name="Davis J."/>
            <person name="Johnson M."/>
            <person name="Kuczek E."/>
            <person name="Alt D.P."/>
            <person name="Peterson-Burch B."/>
            <person name="Coppel R.L."/>
            <person name="Rood J.I."/>
            <person name="Davies J.K."/>
            <person name="Adler B."/>
        </authorList>
    </citation>
    <scope>NUCLEOTIDE SEQUENCE [LARGE SCALE GENOMIC DNA]</scope>
    <source>
        <strain>L550</strain>
    </source>
</reference>
<evidence type="ECO:0000255" key="1">
    <source>
        <dbReference type="HAMAP-Rule" id="MF_00005"/>
    </source>
</evidence>
<protein>
    <recommendedName>
        <fullName evidence="1">Argininosuccinate synthase</fullName>
        <ecNumber evidence="1">6.3.4.5</ecNumber>
    </recommendedName>
    <alternativeName>
        <fullName evidence="1">Citrulline--aspartate ligase</fullName>
    </alternativeName>
</protein>
<accession>Q056F0</accession>
<dbReference type="EC" id="6.3.4.5" evidence="1"/>
<dbReference type="EMBL" id="CP000348">
    <property type="protein sequence ID" value="ABJ77795.1"/>
    <property type="molecule type" value="Genomic_DNA"/>
</dbReference>
<dbReference type="RefSeq" id="WP_011669254.1">
    <property type="nucleotide sequence ID" value="NC_008508.1"/>
</dbReference>
<dbReference type="SMR" id="Q056F0"/>
<dbReference type="KEGG" id="lbl:LBL_0178"/>
<dbReference type="HOGENOM" id="CLU_032784_4_2_12"/>
<dbReference type="UniPathway" id="UPA00068">
    <property type="reaction ID" value="UER00113"/>
</dbReference>
<dbReference type="GO" id="GO:0005737">
    <property type="term" value="C:cytoplasm"/>
    <property type="evidence" value="ECO:0007669"/>
    <property type="project" value="UniProtKB-SubCell"/>
</dbReference>
<dbReference type="GO" id="GO:0004055">
    <property type="term" value="F:argininosuccinate synthase activity"/>
    <property type="evidence" value="ECO:0007669"/>
    <property type="project" value="UniProtKB-UniRule"/>
</dbReference>
<dbReference type="GO" id="GO:0005524">
    <property type="term" value="F:ATP binding"/>
    <property type="evidence" value="ECO:0007669"/>
    <property type="project" value="UniProtKB-UniRule"/>
</dbReference>
<dbReference type="GO" id="GO:0000053">
    <property type="term" value="P:argininosuccinate metabolic process"/>
    <property type="evidence" value="ECO:0007669"/>
    <property type="project" value="TreeGrafter"/>
</dbReference>
<dbReference type="GO" id="GO:0006526">
    <property type="term" value="P:L-arginine biosynthetic process"/>
    <property type="evidence" value="ECO:0007669"/>
    <property type="project" value="UniProtKB-UniRule"/>
</dbReference>
<dbReference type="GO" id="GO:0000050">
    <property type="term" value="P:urea cycle"/>
    <property type="evidence" value="ECO:0007669"/>
    <property type="project" value="TreeGrafter"/>
</dbReference>
<dbReference type="CDD" id="cd01999">
    <property type="entry name" value="ASS"/>
    <property type="match status" value="1"/>
</dbReference>
<dbReference type="FunFam" id="3.40.50.620:FF:000019">
    <property type="entry name" value="Argininosuccinate synthase"/>
    <property type="match status" value="1"/>
</dbReference>
<dbReference type="FunFam" id="3.90.1260.10:FF:000007">
    <property type="entry name" value="Argininosuccinate synthase"/>
    <property type="match status" value="1"/>
</dbReference>
<dbReference type="Gene3D" id="3.90.1260.10">
    <property type="entry name" value="Argininosuccinate synthetase, chain A, domain 2"/>
    <property type="match status" value="1"/>
</dbReference>
<dbReference type="Gene3D" id="3.40.50.620">
    <property type="entry name" value="HUPs"/>
    <property type="match status" value="1"/>
</dbReference>
<dbReference type="Gene3D" id="1.20.5.470">
    <property type="entry name" value="Single helix bin"/>
    <property type="match status" value="1"/>
</dbReference>
<dbReference type="HAMAP" id="MF_00005">
    <property type="entry name" value="Arg_succ_synth_type1"/>
    <property type="match status" value="1"/>
</dbReference>
<dbReference type="InterPro" id="IPR048268">
    <property type="entry name" value="Arginosuc_syn_C"/>
</dbReference>
<dbReference type="InterPro" id="IPR048267">
    <property type="entry name" value="Arginosuc_syn_N"/>
</dbReference>
<dbReference type="InterPro" id="IPR001518">
    <property type="entry name" value="Arginosuc_synth"/>
</dbReference>
<dbReference type="InterPro" id="IPR018223">
    <property type="entry name" value="Arginosuc_synth_CS"/>
</dbReference>
<dbReference type="InterPro" id="IPR023434">
    <property type="entry name" value="Arginosuc_synth_type_1_subfam"/>
</dbReference>
<dbReference type="InterPro" id="IPR024074">
    <property type="entry name" value="AS_cat/multimer_dom_body"/>
</dbReference>
<dbReference type="InterPro" id="IPR014729">
    <property type="entry name" value="Rossmann-like_a/b/a_fold"/>
</dbReference>
<dbReference type="NCBIfam" id="TIGR00032">
    <property type="entry name" value="argG"/>
    <property type="match status" value="1"/>
</dbReference>
<dbReference type="NCBIfam" id="NF001770">
    <property type="entry name" value="PRK00509.1"/>
    <property type="match status" value="1"/>
</dbReference>
<dbReference type="PANTHER" id="PTHR11587">
    <property type="entry name" value="ARGININOSUCCINATE SYNTHASE"/>
    <property type="match status" value="1"/>
</dbReference>
<dbReference type="PANTHER" id="PTHR11587:SF2">
    <property type="entry name" value="ARGININOSUCCINATE SYNTHASE"/>
    <property type="match status" value="1"/>
</dbReference>
<dbReference type="Pfam" id="PF20979">
    <property type="entry name" value="Arginosuc_syn_C"/>
    <property type="match status" value="1"/>
</dbReference>
<dbReference type="Pfam" id="PF00764">
    <property type="entry name" value="Arginosuc_synth"/>
    <property type="match status" value="1"/>
</dbReference>
<dbReference type="SUPFAM" id="SSF52402">
    <property type="entry name" value="Adenine nucleotide alpha hydrolases-like"/>
    <property type="match status" value="1"/>
</dbReference>
<dbReference type="SUPFAM" id="SSF69864">
    <property type="entry name" value="Argininosuccinate synthetase, C-terminal domain"/>
    <property type="match status" value="1"/>
</dbReference>
<dbReference type="PROSITE" id="PS00564">
    <property type="entry name" value="ARGININOSUCCIN_SYN_1"/>
    <property type="match status" value="1"/>
</dbReference>
<dbReference type="PROSITE" id="PS00565">
    <property type="entry name" value="ARGININOSUCCIN_SYN_2"/>
    <property type="match status" value="1"/>
</dbReference>
<comment type="catalytic activity">
    <reaction evidence="1">
        <text>L-citrulline + L-aspartate + ATP = 2-(N(omega)-L-arginino)succinate + AMP + diphosphate + H(+)</text>
        <dbReference type="Rhea" id="RHEA:10932"/>
        <dbReference type="ChEBI" id="CHEBI:15378"/>
        <dbReference type="ChEBI" id="CHEBI:29991"/>
        <dbReference type="ChEBI" id="CHEBI:30616"/>
        <dbReference type="ChEBI" id="CHEBI:33019"/>
        <dbReference type="ChEBI" id="CHEBI:57472"/>
        <dbReference type="ChEBI" id="CHEBI:57743"/>
        <dbReference type="ChEBI" id="CHEBI:456215"/>
        <dbReference type="EC" id="6.3.4.5"/>
    </reaction>
</comment>
<comment type="pathway">
    <text evidence="1">Amino-acid biosynthesis; L-arginine biosynthesis; L-arginine from L-ornithine and carbamoyl phosphate: step 2/3.</text>
</comment>
<comment type="subunit">
    <text evidence="1">Homotetramer.</text>
</comment>
<comment type="subcellular location">
    <subcellularLocation>
        <location evidence="1">Cytoplasm</location>
    </subcellularLocation>
</comment>
<comment type="similarity">
    <text evidence="1">Belongs to the argininosuccinate synthase family. Type 1 subfamily.</text>
</comment>
<proteinExistence type="inferred from homology"/>
<name>ASSY_LEPBL</name>